<dbReference type="EMBL" id="AC006234">
    <property type="protein sequence ID" value="AAM15207.1"/>
    <property type="molecule type" value="Genomic_DNA"/>
</dbReference>
<dbReference type="EMBL" id="CP002685">
    <property type="protein sequence ID" value="AEC07077.1"/>
    <property type="molecule type" value="Genomic_DNA"/>
</dbReference>
<dbReference type="EMBL" id="CP002685">
    <property type="protein sequence ID" value="AEC07078.1"/>
    <property type="molecule type" value="Genomic_DNA"/>
</dbReference>
<dbReference type="EMBL" id="AY735579">
    <property type="protein sequence ID" value="AAU44449.1"/>
    <property type="molecule type" value="mRNA"/>
</dbReference>
<dbReference type="RefSeq" id="NP_001189563.1">
    <molecule id="Q8S8I1-2"/>
    <property type="nucleotide sequence ID" value="NM_001202634.2"/>
</dbReference>
<dbReference type="RefSeq" id="NP_565486.1">
    <molecule id="Q8S8I1-1"/>
    <property type="nucleotide sequence ID" value="NM_127648.3"/>
</dbReference>
<dbReference type="SMR" id="Q8S8I1"/>
<dbReference type="FunCoup" id="Q8S8I1">
    <property type="interactions" value="240"/>
</dbReference>
<dbReference type="STRING" id="3702.Q8S8I1"/>
<dbReference type="PaxDb" id="3702-AT2G20815.1"/>
<dbReference type="ProteomicsDB" id="226092">
    <molecule id="Q8S8I1-1"/>
</dbReference>
<dbReference type="EnsemblPlants" id="AT2G20815.1">
    <molecule id="Q8S8I1-1"/>
    <property type="protein sequence ID" value="AT2G20815.1"/>
    <property type="gene ID" value="AT2G20815"/>
</dbReference>
<dbReference type="EnsemblPlants" id="AT2G20815.2">
    <molecule id="Q8S8I1-2"/>
    <property type="protein sequence ID" value="AT2G20815.2"/>
    <property type="gene ID" value="AT2G20815"/>
</dbReference>
<dbReference type="GeneID" id="816612"/>
<dbReference type="Gramene" id="AT2G20815.1">
    <molecule id="Q8S8I1-1"/>
    <property type="protein sequence ID" value="AT2G20815.1"/>
    <property type="gene ID" value="AT2G20815"/>
</dbReference>
<dbReference type="Gramene" id="AT2G20815.2">
    <molecule id="Q8S8I1-2"/>
    <property type="protein sequence ID" value="AT2G20815.2"/>
    <property type="gene ID" value="AT2G20815"/>
</dbReference>
<dbReference type="KEGG" id="ath:AT2G20815"/>
<dbReference type="Araport" id="AT2G20815"/>
<dbReference type="TAIR" id="AT2G20815">
    <property type="gene designation" value="QWRF3"/>
</dbReference>
<dbReference type="eggNOG" id="ENOG502QVNZ">
    <property type="taxonomic scope" value="Eukaryota"/>
</dbReference>
<dbReference type="HOGENOM" id="CLU_038518_0_0_1"/>
<dbReference type="InParanoid" id="Q8S8I1"/>
<dbReference type="PhylomeDB" id="Q8S8I1"/>
<dbReference type="PRO" id="PR:Q8S8I1"/>
<dbReference type="Proteomes" id="UP000006548">
    <property type="component" value="Chromosome 2"/>
</dbReference>
<dbReference type="ExpressionAtlas" id="Q8S8I1">
    <property type="expression patterns" value="baseline and differential"/>
</dbReference>
<dbReference type="InterPro" id="IPR007573">
    <property type="entry name" value="QWRF"/>
</dbReference>
<dbReference type="PANTHER" id="PTHR31807">
    <property type="entry name" value="AUGMIN FAMILY MEMBER"/>
    <property type="match status" value="1"/>
</dbReference>
<dbReference type="PANTHER" id="PTHR31807:SF31">
    <property type="entry name" value="QWRF MOTIF PROTEIN (DUF566)-RELATED"/>
    <property type="match status" value="1"/>
</dbReference>
<dbReference type="Pfam" id="PF04484">
    <property type="entry name" value="QWRF"/>
    <property type="match status" value="1"/>
</dbReference>
<proteinExistence type="evidence at transcript level"/>
<accession>Q8S8I1</accession>
<accession>F4IFJ5</accession>
<accession>Q5XVE3</accession>
<sequence>MKSCEHELLKTRRGKSREVSSRFLSSPSASSSPNRRNSTSNSSRDDQNNNGVKGHLGLKKHDRMSDGTRVCFGLPNQSSIEVDTKENRMPSPWINDEDNVILPGRFSVDECALYRASSRRNSCSLLYESFNDETDSELSDVSCASSLSTNRSSWNHKPGIKVSSKYLHDLTAKPSKGNNKTKLRSQDDSQRTNSSKGIENRLQRNNSVSRYGSSMSQWALSPGRSLDTQAVTVPSSKLKPPRGKGVGKLINLGFDFFRSKNKSSPFTSPLKPKTCDTESAHQLKLMNNRLLQWRFVNARACDVNKNVASQEKNQLLCAWDTLIKLNNLVLQERIKLQKKNLEMKLNYVFLSQVKHLEAWEDMEIQHLSSLSIIRDSLHSVLSRLPLKEGAKVNLESAVSIIKNAEAVTDAIISTVDDYAPTMEGIVPLASQLAEVVVQEKLMLEKCHDLLRMISELEMQERSLKCCFLIQHKQTFDTNLLKH</sequence>
<evidence type="ECO:0000256" key="1">
    <source>
        <dbReference type="SAM" id="MobiDB-lite"/>
    </source>
</evidence>
<evidence type="ECO:0000303" key="2">
    <source ref="3"/>
</evidence>
<evidence type="ECO:0000305" key="3"/>
<protein>
    <recommendedName>
        <fullName>QWRF motif-containing protein 3</fullName>
    </recommendedName>
</protein>
<keyword id="KW-0025">Alternative splicing</keyword>
<keyword id="KW-1185">Reference proteome</keyword>
<gene>
    <name type="primary">QWRF3</name>
    <name type="ordered locus">At2g20815</name>
    <name type="ORF">F5H14</name>
</gene>
<name>QWRF3_ARATH</name>
<comment type="alternative products">
    <event type="alternative splicing"/>
    <isoform>
        <id>Q8S8I1-1</id>
        <name>1</name>
        <sequence type="displayed"/>
    </isoform>
    <isoform>
        <id>Q8S8I1-2</id>
        <name>2</name>
        <sequence type="described" ref="VSP_053217 VSP_053218"/>
    </isoform>
</comment>
<comment type="similarity">
    <text evidence="3">Belongs to the QWRF family.</text>
</comment>
<organism>
    <name type="scientific">Arabidopsis thaliana</name>
    <name type="common">Mouse-ear cress</name>
    <dbReference type="NCBI Taxonomy" id="3702"/>
    <lineage>
        <taxon>Eukaryota</taxon>
        <taxon>Viridiplantae</taxon>
        <taxon>Streptophyta</taxon>
        <taxon>Embryophyta</taxon>
        <taxon>Tracheophyta</taxon>
        <taxon>Spermatophyta</taxon>
        <taxon>Magnoliopsida</taxon>
        <taxon>eudicotyledons</taxon>
        <taxon>Gunneridae</taxon>
        <taxon>Pentapetalae</taxon>
        <taxon>rosids</taxon>
        <taxon>malvids</taxon>
        <taxon>Brassicales</taxon>
        <taxon>Brassicaceae</taxon>
        <taxon>Camelineae</taxon>
        <taxon>Arabidopsis</taxon>
    </lineage>
</organism>
<feature type="chain" id="PRO_0000423624" description="QWRF motif-containing protein 3">
    <location>
        <begin position="1"/>
        <end position="482"/>
    </location>
</feature>
<feature type="region of interest" description="Disordered" evidence="1">
    <location>
        <begin position="1"/>
        <end position="60"/>
    </location>
</feature>
<feature type="region of interest" description="Disordered" evidence="1">
    <location>
        <begin position="171"/>
        <end position="220"/>
    </location>
</feature>
<feature type="short sequence motif" description="QWRF motif">
    <location>
        <begin position="292"/>
        <end position="295"/>
    </location>
</feature>
<feature type="compositionally biased region" description="Basic and acidic residues" evidence="1">
    <location>
        <begin position="1"/>
        <end position="20"/>
    </location>
</feature>
<feature type="compositionally biased region" description="Low complexity" evidence="1">
    <location>
        <begin position="21"/>
        <end position="42"/>
    </location>
</feature>
<feature type="compositionally biased region" description="Polar residues" evidence="1">
    <location>
        <begin position="191"/>
        <end position="219"/>
    </location>
</feature>
<feature type="splice variant" id="VSP_053217" description="In isoform 2." evidence="2">
    <location>
        <begin position="19"/>
        <end position="47"/>
    </location>
</feature>
<feature type="splice variant" id="VSP_053218" description="In isoform 2." evidence="2">
    <original>T</original>
    <variation>TQ</variation>
    <location>
        <position position="421"/>
    </location>
</feature>
<feature type="sequence conflict" description="In Ref. 3; AAU44449." evidence="3" ref="3">
    <original>V</original>
    <variation>G</variation>
    <location>
        <position position="435"/>
    </location>
</feature>
<feature type="sequence conflict" description="In Ref. 3; AAU44449." evidence="3" ref="3">
    <original>CHD</original>
    <variation>SHA</variation>
    <location>
        <begin position="446"/>
        <end position="448"/>
    </location>
</feature>
<feature type="sequence conflict" description="In Ref. 3; AAU44449." evidence="3" ref="3">
    <original>R</original>
    <variation>G</variation>
    <location>
        <position position="461"/>
    </location>
</feature>
<feature type="sequence conflict" description="In Ref. 3; AAU44449." evidence="3" ref="3">
    <original>LL</original>
    <variation>FF</variation>
    <location>
        <begin position="479"/>
        <end position="480"/>
    </location>
</feature>
<reference key="1">
    <citation type="journal article" date="1999" name="Nature">
        <title>Sequence and analysis of chromosome 2 of the plant Arabidopsis thaliana.</title>
        <authorList>
            <person name="Lin X."/>
            <person name="Kaul S."/>
            <person name="Rounsley S.D."/>
            <person name="Shea T.P."/>
            <person name="Benito M.-I."/>
            <person name="Town C.D."/>
            <person name="Fujii C.Y."/>
            <person name="Mason T.M."/>
            <person name="Bowman C.L."/>
            <person name="Barnstead M.E."/>
            <person name="Feldblyum T.V."/>
            <person name="Buell C.R."/>
            <person name="Ketchum K.A."/>
            <person name="Lee J.J."/>
            <person name="Ronning C.M."/>
            <person name="Koo H.L."/>
            <person name="Moffat K.S."/>
            <person name="Cronin L.A."/>
            <person name="Shen M."/>
            <person name="Pai G."/>
            <person name="Van Aken S."/>
            <person name="Umayam L."/>
            <person name="Tallon L.J."/>
            <person name="Gill J.E."/>
            <person name="Adams M.D."/>
            <person name="Carrera A.J."/>
            <person name="Creasy T.H."/>
            <person name="Goodman H.M."/>
            <person name="Somerville C.R."/>
            <person name="Copenhaver G.P."/>
            <person name="Preuss D."/>
            <person name="Nierman W.C."/>
            <person name="White O."/>
            <person name="Eisen J.A."/>
            <person name="Salzberg S.L."/>
            <person name="Fraser C.M."/>
            <person name="Venter J.C."/>
        </authorList>
    </citation>
    <scope>NUCLEOTIDE SEQUENCE [LARGE SCALE GENOMIC DNA]</scope>
    <source>
        <strain>cv. Columbia</strain>
    </source>
</reference>
<reference key="2">
    <citation type="journal article" date="2017" name="Plant J.">
        <title>Araport11: a complete reannotation of the Arabidopsis thaliana reference genome.</title>
        <authorList>
            <person name="Cheng C.Y."/>
            <person name="Krishnakumar V."/>
            <person name="Chan A.P."/>
            <person name="Thibaud-Nissen F."/>
            <person name="Schobel S."/>
            <person name="Town C.D."/>
        </authorList>
    </citation>
    <scope>GENOME REANNOTATION</scope>
    <source>
        <strain>cv. Columbia</strain>
    </source>
</reference>
<reference key="3">
    <citation type="submission" date="2004-08" db="EMBL/GenBank/DDBJ databases">
        <authorList>
            <person name="Underwood B.A."/>
            <person name="Xiao Y.-L."/>
            <person name="Moskal W.A. Jr."/>
            <person name="Monaghan E.L."/>
            <person name="Wang W."/>
            <person name="Redman J.C."/>
            <person name="Wu H.C."/>
            <person name="Utterback T."/>
            <person name="Town C.D."/>
        </authorList>
    </citation>
    <scope>NUCLEOTIDE SEQUENCE [LARGE SCALE MRNA] (ISOFORM 2)</scope>
    <source>
        <strain>cv. Columbia</strain>
    </source>
</reference>
<reference key="4">
    <citation type="journal article" date="2010" name="Plant Cell">
        <title>The cytoskeleton and the peroxisomal-targeted snowy cotyledon3 protein are required for chloroplast development in Arabidopsis.</title>
        <authorList>
            <person name="Albrecht V."/>
            <person name="Simkova K."/>
            <person name="Carrie C."/>
            <person name="Delannoy E."/>
            <person name="Giraud E."/>
            <person name="Whelan J."/>
            <person name="Small I.D."/>
            <person name="Apel K."/>
            <person name="Badger M.R."/>
            <person name="Pogson B.J."/>
        </authorList>
    </citation>
    <scope>GENE FAMILY</scope>
    <scope>NOMENCLATURE</scope>
</reference>